<sequence length="184" mass="21038">MSNNESYEILKFGLEHFDKEGKNNNHNNNNNNNNNNNTFNIFETHIESLRNESKMLSELLKKNLQSELLNLPNSIRKMSMEEFLQHCLDIDAINVTSVPTLINNKDNNSETEQQQQQQQNGNNGLSLTELLFSPEKSVNEIDNSNSNTSIDSESMNNIKQKVIDILNSPQLILKKKGFNSNNNL</sequence>
<feature type="chain" id="PRO_0000348495" description="Putative uncharacterized protein DDB_G0285671">
    <location>
        <begin position="1"/>
        <end position="184"/>
    </location>
</feature>
<accession>Q54MT6</accession>
<dbReference type="EMBL" id="AAFI02000079">
    <property type="protein sequence ID" value="EAL64673.1"/>
    <property type="molecule type" value="Genomic_DNA"/>
</dbReference>
<dbReference type="RefSeq" id="XP_638207.1">
    <property type="nucleotide sequence ID" value="XM_633115.1"/>
</dbReference>
<dbReference type="SMR" id="Q54MT6"/>
<dbReference type="FunCoup" id="Q54MT6">
    <property type="interactions" value="877"/>
</dbReference>
<dbReference type="PaxDb" id="44689-DDB0186650"/>
<dbReference type="EnsemblProtists" id="EAL64673">
    <property type="protein sequence ID" value="EAL64673"/>
    <property type="gene ID" value="DDB_G0285671"/>
</dbReference>
<dbReference type="GeneID" id="8625254"/>
<dbReference type="KEGG" id="ddi:DDB_G0285671"/>
<dbReference type="dictyBase" id="DDB_G0285671"/>
<dbReference type="VEuPathDB" id="AmoebaDB:DDB_G0285671"/>
<dbReference type="eggNOG" id="ENOG502RIKF">
    <property type="taxonomic scope" value="Eukaryota"/>
</dbReference>
<dbReference type="HOGENOM" id="CLU_1470788_0_0_1"/>
<dbReference type="InParanoid" id="Q54MT6"/>
<dbReference type="PRO" id="PR:Q54MT6"/>
<dbReference type="Proteomes" id="UP000002195">
    <property type="component" value="Chromosome 4"/>
</dbReference>
<dbReference type="Gene3D" id="6.10.250.1900">
    <property type="match status" value="1"/>
</dbReference>
<dbReference type="InterPro" id="IPR018851">
    <property type="entry name" value="Borealin_N"/>
</dbReference>
<dbReference type="Pfam" id="PF10444">
    <property type="entry name" value="Nbl1_Borealin_N"/>
    <property type="match status" value="1"/>
</dbReference>
<organism>
    <name type="scientific">Dictyostelium discoideum</name>
    <name type="common">Social amoeba</name>
    <dbReference type="NCBI Taxonomy" id="44689"/>
    <lineage>
        <taxon>Eukaryota</taxon>
        <taxon>Amoebozoa</taxon>
        <taxon>Evosea</taxon>
        <taxon>Eumycetozoa</taxon>
        <taxon>Dictyostelia</taxon>
        <taxon>Dictyosteliales</taxon>
        <taxon>Dictyosteliaceae</taxon>
        <taxon>Dictyostelium</taxon>
    </lineage>
</organism>
<proteinExistence type="predicted"/>
<gene>
    <name type="ORF">DDB_G0285671</name>
</gene>
<name>Y6650_DICDI</name>
<keyword id="KW-1185">Reference proteome</keyword>
<protein>
    <recommendedName>
        <fullName>Putative uncharacterized protein DDB_G0285671</fullName>
    </recommendedName>
</protein>
<reference key="1">
    <citation type="journal article" date="2005" name="Nature">
        <title>The genome of the social amoeba Dictyostelium discoideum.</title>
        <authorList>
            <person name="Eichinger L."/>
            <person name="Pachebat J.A."/>
            <person name="Gloeckner G."/>
            <person name="Rajandream M.A."/>
            <person name="Sucgang R."/>
            <person name="Berriman M."/>
            <person name="Song J."/>
            <person name="Olsen R."/>
            <person name="Szafranski K."/>
            <person name="Xu Q."/>
            <person name="Tunggal B."/>
            <person name="Kummerfeld S."/>
            <person name="Madera M."/>
            <person name="Konfortov B.A."/>
            <person name="Rivero F."/>
            <person name="Bankier A.T."/>
            <person name="Lehmann R."/>
            <person name="Hamlin N."/>
            <person name="Davies R."/>
            <person name="Gaudet P."/>
            <person name="Fey P."/>
            <person name="Pilcher K."/>
            <person name="Chen G."/>
            <person name="Saunders D."/>
            <person name="Sodergren E.J."/>
            <person name="Davis P."/>
            <person name="Kerhornou A."/>
            <person name="Nie X."/>
            <person name="Hall N."/>
            <person name="Anjard C."/>
            <person name="Hemphill L."/>
            <person name="Bason N."/>
            <person name="Farbrother P."/>
            <person name="Desany B."/>
            <person name="Just E."/>
            <person name="Morio T."/>
            <person name="Rost R."/>
            <person name="Churcher C.M."/>
            <person name="Cooper J."/>
            <person name="Haydock S."/>
            <person name="van Driessche N."/>
            <person name="Cronin A."/>
            <person name="Goodhead I."/>
            <person name="Muzny D.M."/>
            <person name="Mourier T."/>
            <person name="Pain A."/>
            <person name="Lu M."/>
            <person name="Harper D."/>
            <person name="Lindsay R."/>
            <person name="Hauser H."/>
            <person name="James K.D."/>
            <person name="Quiles M."/>
            <person name="Madan Babu M."/>
            <person name="Saito T."/>
            <person name="Buchrieser C."/>
            <person name="Wardroper A."/>
            <person name="Felder M."/>
            <person name="Thangavelu M."/>
            <person name="Johnson D."/>
            <person name="Knights A."/>
            <person name="Loulseged H."/>
            <person name="Mungall K.L."/>
            <person name="Oliver K."/>
            <person name="Price C."/>
            <person name="Quail M.A."/>
            <person name="Urushihara H."/>
            <person name="Hernandez J."/>
            <person name="Rabbinowitsch E."/>
            <person name="Steffen D."/>
            <person name="Sanders M."/>
            <person name="Ma J."/>
            <person name="Kohara Y."/>
            <person name="Sharp S."/>
            <person name="Simmonds M.N."/>
            <person name="Spiegler S."/>
            <person name="Tivey A."/>
            <person name="Sugano S."/>
            <person name="White B."/>
            <person name="Walker D."/>
            <person name="Woodward J.R."/>
            <person name="Winckler T."/>
            <person name="Tanaka Y."/>
            <person name="Shaulsky G."/>
            <person name="Schleicher M."/>
            <person name="Weinstock G.M."/>
            <person name="Rosenthal A."/>
            <person name="Cox E.C."/>
            <person name="Chisholm R.L."/>
            <person name="Gibbs R.A."/>
            <person name="Loomis W.F."/>
            <person name="Platzer M."/>
            <person name="Kay R.R."/>
            <person name="Williams J.G."/>
            <person name="Dear P.H."/>
            <person name="Noegel A.A."/>
            <person name="Barrell B.G."/>
            <person name="Kuspa A."/>
        </authorList>
    </citation>
    <scope>NUCLEOTIDE SEQUENCE [LARGE SCALE GENOMIC DNA]</scope>
    <source>
        <strain>AX4</strain>
    </source>
</reference>